<proteinExistence type="inferred from homology"/>
<evidence type="ECO:0000255" key="1">
    <source>
        <dbReference type="HAMAP-Rule" id="MF_01720"/>
    </source>
</evidence>
<evidence type="ECO:0000256" key="2">
    <source>
        <dbReference type="SAM" id="MobiDB-lite"/>
    </source>
</evidence>
<dbReference type="EC" id="7.6.2.-" evidence="1"/>
<dbReference type="EMBL" id="AM167904">
    <property type="protein sequence ID" value="CAJ50424.1"/>
    <property type="molecule type" value="Genomic_DNA"/>
</dbReference>
<dbReference type="RefSeq" id="WP_039051303.1">
    <property type="nucleotide sequence ID" value="NC_010645.1"/>
</dbReference>
<dbReference type="SMR" id="Q2KVS6"/>
<dbReference type="STRING" id="360910.BAV2813"/>
<dbReference type="KEGG" id="bav:BAV2813"/>
<dbReference type="eggNOG" id="COG0577">
    <property type="taxonomic scope" value="Bacteria"/>
</dbReference>
<dbReference type="eggNOG" id="COG1136">
    <property type="taxonomic scope" value="Bacteria"/>
</dbReference>
<dbReference type="HOGENOM" id="CLU_000604_78_2_4"/>
<dbReference type="OrthoDB" id="4814201at2"/>
<dbReference type="Proteomes" id="UP000001977">
    <property type="component" value="Chromosome"/>
</dbReference>
<dbReference type="GO" id="GO:0005886">
    <property type="term" value="C:plasma membrane"/>
    <property type="evidence" value="ECO:0007669"/>
    <property type="project" value="UniProtKB-SubCell"/>
</dbReference>
<dbReference type="GO" id="GO:0005524">
    <property type="term" value="F:ATP binding"/>
    <property type="evidence" value="ECO:0007669"/>
    <property type="project" value="UniProtKB-KW"/>
</dbReference>
<dbReference type="GO" id="GO:0016887">
    <property type="term" value="F:ATP hydrolysis activity"/>
    <property type="evidence" value="ECO:0007669"/>
    <property type="project" value="InterPro"/>
</dbReference>
<dbReference type="GO" id="GO:0022857">
    <property type="term" value="F:transmembrane transporter activity"/>
    <property type="evidence" value="ECO:0007669"/>
    <property type="project" value="TreeGrafter"/>
</dbReference>
<dbReference type="GO" id="GO:0046677">
    <property type="term" value="P:response to antibiotic"/>
    <property type="evidence" value="ECO:0007669"/>
    <property type="project" value="UniProtKB-KW"/>
</dbReference>
<dbReference type="CDD" id="cd03255">
    <property type="entry name" value="ABC_MJ0796_LolCDE_FtsE"/>
    <property type="match status" value="1"/>
</dbReference>
<dbReference type="FunFam" id="3.40.50.300:FF:000032">
    <property type="entry name" value="Export ABC transporter ATP-binding protein"/>
    <property type="match status" value="1"/>
</dbReference>
<dbReference type="Gene3D" id="3.40.50.300">
    <property type="entry name" value="P-loop containing nucleotide triphosphate hydrolases"/>
    <property type="match status" value="1"/>
</dbReference>
<dbReference type="InterPro" id="IPR003593">
    <property type="entry name" value="AAA+_ATPase"/>
</dbReference>
<dbReference type="InterPro" id="IPR003838">
    <property type="entry name" value="ABC3_permease_C"/>
</dbReference>
<dbReference type="InterPro" id="IPR003439">
    <property type="entry name" value="ABC_transporter-like_ATP-bd"/>
</dbReference>
<dbReference type="InterPro" id="IPR017871">
    <property type="entry name" value="ABC_transporter-like_CS"/>
</dbReference>
<dbReference type="InterPro" id="IPR017911">
    <property type="entry name" value="MacB-like_ATP-bd"/>
</dbReference>
<dbReference type="InterPro" id="IPR025857">
    <property type="entry name" value="MacB_PCD"/>
</dbReference>
<dbReference type="InterPro" id="IPR050250">
    <property type="entry name" value="Macrolide_Exporter_MacB"/>
</dbReference>
<dbReference type="InterPro" id="IPR027417">
    <property type="entry name" value="P-loop_NTPase"/>
</dbReference>
<dbReference type="PANTHER" id="PTHR30572:SF14">
    <property type="entry name" value="MACROLIDE EXPORT ATP-BINDING_PERMEASE PROTEIN MACB"/>
    <property type="match status" value="1"/>
</dbReference>
<dbReference type="PANTHER" id="PTHR30572">
    <property type="entry name" value="MEMBRANE COMPONENT OF TRANSPORTER-RELATED"/>
    <property type="match status" value="1"/>
</dbReference>
<dbReference type="Pfam" id="PF00005">
    <property type="entry name" value="ABC_tran"/>
    <property type="match status" value="1"/>
</dbReference>
<dbReference type="Pfam" id="PF02687">
    <property type="entry name" value="FtsX"/>
    <property type="match status" value="1"/>
</dbReference>
<dbReference type="Pfam" id="PF12704">
    <property type="entry name" value="MacB_PCD"/>
    <property type="match status" value="1"/>
</dbReference>
<dbReference type="SMART" id="SM00382">
    <property type="entry name" value="AAA"/>
    <property type="match status" value="1"/>
</dbReference>
<dbReference type="SUPFAM" id="SSF52540">
    <property type="entry name" value="P-loop containing nucleoside triphosphate hydrolases"/>
    <property type="match status" value="1"/>
</dbReference>
<dbReference type="PROSITE" id="PS00211">
    <property type="entry name" value="ABC_TRANSPORTER_1"/>
    <property type="match status" value="1"/>
</dbReference>
<dbReference type="PROSITE" id="PS50893">
    <property type="entry name" value="ABC_TRANSPORTER_2"/>
    <property type="match status" value="1"/>
</dbReference>
<dbReference type="PROSITE" id="PS51267">
    <property type="entry name" value="MACB"/>
    <property type="match status" value="1"/>
</dbReference>
<keyword id="KW-0046">Antibiotic resistance</keyword>
<keyword id="KW-0067">ATP-binding</keyword>
<keyword id="KW-0997">Cell inner membrane</keyword>
<keyword id="KW-1003">Cell membrane</keyword>
<keyword id="KW-0472">Membrane</keyword>
<keyword id="KW-0547">Nucleotide-binding</keyword>
<keyword id="KW-1185">Reference proteome</keyword>
<keyword id="KW-1278">Translocase</keyword>
<keyword id="KW-0812">Transmembrane</keyword>
<keyword id="KW-1133">Transmembrane helix</keyword>
<keyword id="KW-0813">Transport</keyword>
<protein>
    <recommendedName>
        <fullName evidence="1">Macrolide export ATP-binding/permease protein MacB</fullName>
        <ecNumber evidence="1">7.6.2.-</ecNumber>
    </recommendedName>
</protein>
<sequence>MSEPLIELRDVWREFAAGDQVVAVLREVNLSIQAGEMVAIVGASGSGKSTLMNILGCLDRPSRGGYRVDGRETARMDPDELAELRREHFGFIFQRYHLLADLSAQANVEMPAVYAGMASGPRHERAAALLRRLGLSERLDYRPGQLSGGQQQRVSIARALMNGGRIILADEPTGALDTQTGQEVLRILKELNAAGHTIVLVTHDMSVARHARRIIEISDGRIVSDQARPDAPPLDALAGDEGPEAPRPAPQPLRAWLDRGSEALRMALLAMNAHRLRTCLTMLGIIIGIAAVVSVVALGAGSRQMILDDISAMGTNTVDVLPGKHFGDEKAASIRTLVAADVEALARQPYADSVSPEVTTSATLRYRNVSVNGTVQGVGEQYPRVRGVRIAQGQFFDAAAVARRGQDVVIDNNTRKALFGNHTDPIGQVIFIGAVPARVIGVTRPQETLFGNADALHVWIPYTTALSRILGQQHLRSITVRVNDSTPPKAAEAAITKLMLQRHGTQDFFVFNTDTIRQTVERTTATLTLLVSMIAVISLVVVGIGVMNIMLVSVTERTREIGVRMAVGARRSDIMQQFLIEAVLVCLIGGVLGILLSLSIGVLVSQATRGAFQMLYSSGSMVLAFVCSTLIGVAFGFLPARSAARLDPVESLARE</sequence>
<feature type="chain" id="PRO_0000269924" description="Macrolide export ATP-binding/permease protein MacB">
    <location>
        <begin position="1"/>
        <end position="655"/>
    </location>
</feature>
<feature type="transmembrane region" description="Helical" evidence="1">
    <location>
        <begin position="280"/>
        <end position="300"/>
    </location>
</feature>
<feature type="transmembrane region" description="Helical" evidence="1">
    <location>
        <begin position="527"/>
        <end position="547"/>
    </location>
</feature>
<feature type="transmembrane region" description="Helical" evidence="1">
    <location>
        <begin position="583"/>
        <end position="603"/>
    </location>
</feature>
<feature type="transmembrane region" description="Helical" evidence="1">
    <location>
        <begin position="620"/>
        <end position="640"/>
    </location>
</feature>
<feature type="domain" description="ABC transporter" evidence="1">
    <location>
        <begin position="6"/>
        <end position="244"/>
    </location>
</feature>
<feature type="region of interest" description="Disordered" evidence="2">
    <location>
        <begin position="225"/>
        <end position="252"/>
    </location>
</feature>
<feature type="binding site" evidence="1">
    <location>
        <begin position="42"/>
        <end position="49"/>
    </location>
    <ligand>
        <name>ATP</name>
        <dbReference type="ChEBI" id="CHEBI:30616"/>
    </ligand>
</feature>
<gene>
    <name evidence="1" type="primary">macB</name>
    <name type="ordered locus">BAV2813</name>
</gene>
<accession>Q2KVS6</accession>
<organism>
    <name type="scientific">Bordetella avium (strain 197N)</name>
    <dbReference type="NCBI Taxonomy" id="360910"/>
    <lineage>
        <taxon>Bacteria</taxon>
        <taxon>Pseudomonadati</taxon>
        <taxon>Pseudomonadota</taxon>
        <taxon>Betaproteobacteria</taxon>
        <taxon>Burkholderiales</taxon>
        <taxon>Alcaligenaceae</taxon>
        <taxon>Bordetella</taxon>
    </lineage>
</organism>
<name>MACB_BORA1</name>
<comment type="function">
    <text evidence="1">Non-canonical ABC transporter that contains transmembrane domains (TMD), which form a pore in the inner membrane, and an ATP-binding domain (NBD), which is responsible for energy generation. Confers resistance against macrolides.</text>
</comment>
<comment type="subunit">
    <text evidence="1">Homodimer.</text>
</comment>
<comment type="subcellular location">
    <subcellularLocation>
        <location evidence="1">Cell inner membrane</location>
        <topology evidence="1">Multi-pass membrane protein</topology>
    </subcellularLocation>
</comment>
<comment type="similarity">
    <text evidence="1">Belongs to the ABC transporter superfamily. Macrolide exporter (TC 3.A.1.122) family.</text>
</comment>
<reference key="1">
    <citation type="journal article" date="2006" name="J. Bacteriol.">
        <title>Comparison of the genome sequence of the poultry pathogen Bordetella avium with those of B. bronchiseptica, B. pertussis, and B. parapertussis reveals extensive diversity in surface structures associated with host interaction.</title>
        <authorList>
            <person name="Sebaihia M."/>
            <person name="Preston A."/>
            <person name="Maskell D.J."/>
            <person name="Kuzmiak H."/>
            <person name="Connell T.D."/>
            <person name="King N.D."/>
            <person name="Orndorff P.E."/>
            <person name="Miyamoto D.M."/>
            <person name="Thomson N.R."/>
            <person name="Harris D."/>
            <person name="Goble A."/>
            <person name="Lord A."/>
            <person name="Murphy L."/>
            <person name="Quail M.A."/>
            <person name="Rutter S."/>
            <person name="Squares R."/>
            <person name="Squares S."/>
            <person name="Woodward J."/>
            <person name="Parkhill J."/>
            <person name="Temple L.M."/>
        </authorList>
    </citation>
    <scope>NUCLEOTIDE SEQUENCE [LARGE SCALE GENOMIC DNA]</scope>
    <source>
        <strain>197N</strain>
    </source>
</reference>